<evidence type="ECO:0000255" key="1">
    <source>
        <dbReference type="PROSITE-ProRule" id="PRU00041"/>
    </source>
</evidence>
<evidence type="ECO:0000255" key="2">
    <source>
        <dbReference type="PROSITE-ProRule" id="PRU00159"/>
    </source>
</evidence>
<evidence type="ECO:0000255" key="3">
    <source>
        <dbReference type="PROSITE-ProRule" id="PRU00226"/>
    </source>
</evidence>
<evidence type="ECO:0000255" key="4">
    <source>
        <dbReference type="PROSITE-ProRule" id="PRU00618"/>
    </source>
</evidence>
<evidence type="ECO:0000255" key="5">
    <source>
        <dbReference type="PROSITE-ProRule" id="PRU10027"/>
    </source>
</evidence>
<evidence type="ECO:0000269" key="6">
    <source>
    </source>
</evidence>
<evidence type="ECO:0000269" key="7">
    <source>
    </source>
</evidence>
<evidence type="ECO:0000269" key="8">
    <source>
    </source>
</evidence>
<evidence type="ECO:0000269" key="9">
    <source>
    </source>
</evidence>
<evidence type="ECO:0000269" key="10">
    <source>
    </source>
</evidence>
<evidence type="ECO:0000269" key="11">
    <source>
    </source>
</evidence>
<evidence type="ECO:0000269" key="12">
    <source>
    </source>
</evidence>
<evidence type="ECO:0000269" key="13">
    <source>
    </source>
</evidence>
<evidence type="ECO:0000269" key="14">
    <source>
    </source>
</evidence>
<evidence type="ECO:0000269" key="15">
    <source>
    </source>
</evidence>
<evidence type="ECO:0000269" key="16">
    <source>
    </source>
</evidence>
<evidence type="ECO:0000269" key="17">
    <source>
    </source>
</evidence>
<evidence type="ECO:0000269" key="18">
    <source>
    </source>
</evidence>
<evidence type="ECO:0000269" key="19">
    <source>
    </source>
</evidence>
<evidence type="ECO:0000269" key="20">
    <source>
    </source>
</evidence>
<evidence type="ECO:0000269" key="21">
    <source>
    </source>
</evidence>
<evidence type="ECO:0000269" key="22">
    <source>
    </source>
</evidence>
<evidence type="ECO:0000269" key="23">
    <source>
    </source>
</evidence>
<evidence type="ECO:0000269" key="24">
    <source>
    </source>
</evidence>
<evidence type="ECO:0000269" key="25">
    <source ref="39"/>
</evidence>
<evidence type="ECO:0000269" key="26">
    <source ref="4"/>
</evidence>
<evidence type="ECO:0000303" key="27">
    <source>
    </source>
</evidence>
<evidence type="ECO:0000303" key="28">
    <source ref="4"/>
</evidence>
<evidence type="ECO:0000305" key="29"/>
<evidence type="ECO:0000305" key="30">
    <source>
    </source>
</evidence>
<evidence type="ECO:0000305" key="31">
    <source>
    </source>
</evidence>
<evidence type="ECO:0000305" key="32">
    <source>
    </source>
</evidence>
<evidence type="ECO:0007744" key="33">
    <source>
    </source>
</evidence>
<evidence type="ECO:0007744" key="34">
    <source>
    </source>
</evidence>
<evidence type="ECO:0007744" key="35">
    <source>
    </source>
</evidence>
<evidence type="ECO:0007744" key="36">
    <source>
    </source>
</evidence>
<evidence type="ECO:0007744" key="37">
    <source>
    </source>
</evidence>
<evidence type="ECO:0007744" key="38">
    <source>
    </source>
</evidence>
<evidence type="ECO:0007829" key="39">
    <source>
        <dbReference type="PDB" id="1XJD"/>
    </source>
</evidence>
<evidence type="ECO:0007829" key="40">
    <source>
        <dbReference type="PDB" id="2ENJ"/>
    </source>
</evidence>
<evidence type="ECO:0007829" key="41">
    <source>
        <dbReference type="PDB" id="2ENN"/>
    </source>
</evidence>
<evidence type="ECO:0007829" key="42">
    <source>
        <dbReference type="PDB" id="2ENZ"/>
    </source>
</evidence>
<evidence type="ECO:0007829" key="43">
    <source>
        <dbReference type="PDB" id="5F9E"/>
    </source>
</evidence>
<gene>
    <name type="primary">PRKCQ</name>
    <name type="synonym">PRKCT</name>
</gene>
<comment type="function">
    <text evidence="8 10 12 14 15 16 18 19 20 22 24">Calcium-independent, phospholipid- and diacylglycerol (DAG)-dependent serine/threonine-protein kinase that mediates non-redundant functions in T-cell receptor (TCR) signaling, including T-cells activation, proliferation, differentiation and survival, by mediating activation of multiple transcription factors such as NF-kappa-B, JUN, NFATC1 and NFATC2. In TCR-CD3/CD28-co-stimulated T-cells, is required for the activation of NF-kappa-B and JUN, which in turn are essential for IL2 production, and participates in the calcium-dependent NFATC1 and NFATC2 transactivation (PubMed:21964608). Mediates the activation of the canonical NF-kappa-B pathway (NFKB1) by direct phosphorylation of CARD11 on several serine residues, inducing CARD11 association with lipid rafts and recruitment of the BCL10-MALT1 complex, which then activates IKK complex, resulting in nuclear translocation and activation of NFKB1. May also play an indirect role in activation of the non-canonical NF-kappa-B (NFKB2) pathway. In the signaling pathway leading to JUN activation, acts by phosphorylating the mediator STK39/SPAK and may not act through MAP kinases signaling. Plays a critical role in TCR/CD28-induced NFATC1 and NFATC2 transactivation by participating in the regulation of reduced inositol 1,4,5-trisphosphate generation and intracellular calcium mobilization. After costimulation of T-cells through CD28 can phosphorylate CBLB and is required for the ubiquitination and subsequent degradation of CBLB, which is a prerequisite for the activation of TCR. During T-cells differentiation, plays an important role in the development of T-helper 2 (Th2) cells following immune and inflammatory responses, and, in the development of inflammatory autoimmune diseases, is necessary for the activation of IL17-producing Th17 cells. May play a minor role in Th1 response. Upon TCR stimulation, mediates T-cell protective survival signal by phosphorylating BAD, thus protecting T-cells from BAD-induced apoptosis, and by up-regulating BCL-X(L)/BCL2L1 levels through NF-kappa-B and JUN pathways. In platelets, regulates signal transduction downstream of the ITGA2B, CD36/GP4, F2R/PAR1 and F2RL3/PAR4 receptors, playing a positive role in 'outside-in' signaling and granule secretion signal transduction. May relay signals from the activated ITGA2B receptor by regulating the uncoupling of WASP and WIPF1, thereby permitting the regulation of actin filament nucleation and branching activity of the Arp2/3 complex. May mediate inhibitory effects of free fatty acids on insulin signaling by phosphorylating IRS1, which in turn blocks IRS1 tyrosine phosphorylation and downstream activation of the PI3K/AKT pathway. Phosphorylates MSN (moesin) in the presence of phosphatidylglycerol or phosphatidylinositol. Phosphorylates PDPK1 at 'Ser-504' and 'Ser-532' and negatively regulates its ability to phosphorylate PKB/AKT1. Phosphorylates CCDC88A/GIV and inhibits its guanine nucleotide exchange factor activity (PubMed:23509302). Phosphorylates and activates LRRK1, which phosphorylates RAB proteins involved in intracellular trafficking (PubMed:36040231).</text>
</comment>
<comment type="catalytic activity">
    <reaction evidence="20 21 22">
        <text>L-seryl-[protein] + ATP = O-phospho-L-seryl-[protein] + ADP + H(+)</text>
        <dbReference type="Rhea" id="RHEA:17989"/>
        <dbReference type="Rhea" id="RHEA-COMP:9863"/>
        <dbReference type="Rhea" id="RHEA-COMP:11604"/>
        <dbReference type="ChEBI" id="CHEBI:15378"/>
        <dbReference type="ChEBI" id="CHEBI:29999"/>
        <dbReference type="ChEBI" id="CHEBI:30616"/>
        <dbReference type="ChEBI" id="CHEBI:83421"/>
        <dbReference type="ChEBI" id="CHEBI:456216"/>
        <dbReference type="EC" id="2.7.11.13"/>
    </reaction>
</comment>
<comment type="catalytic activity">
    <reaction evidence="21 22">
        <text>L-threonyl-[protein] + ATP = O-phospho-L-threonyl-[protein] + ADP + H(+)</text>
        <dbReference type="Rhea" id="RHEA:46608"/>
        <dbReference type="Rhea" id="RHEA-COMP:11060"/>
        <dbReference type="Rhea" id="RHEA-COMP:11605"/>
        <dbReference type="ChEBI" id="CHEBI:15378"/>
        <dbReference type="ChEBI" id="CHEBI:30013"/>
        <dbReference type="ChEBI" id="CHEBI:30616"/>
        <dbReference type="ChEBI" id="CHEBI:61977"/>
        <dbReference type="ChEBI" id="CHEBI:456216"/>
        <dbReference type="EC" id="2.7.11.13"/>
    </reaction>
</comment>
<comment type="cofactor">
    <cofactor>
        <name>Mg(2+)</name>
        <dbReference type="ChEBI" id="CHEBI:18420"/>
    </cofactor>
</comment>
<comment type="activity regulation">
    <text evidence="21">Novel PKCs (PRKCD, PRKCE, PRKCH and PRKCQ) are calcium-insensitive, but activated by diacylglycerol (DAG) and phosphatidylserine. Three specific sites; Thr-538 (activation loop of the kinase domain), Ser-676 (turn motif) and Ser-695 (hydrophobic region), need to be phosphorylated for its full activation. Inhibited by PRKCH upstream open reading frame 2 (PubMed:34593629).</text>
</comment>
<comment type="subunit">
    <text evidence="6 11 15 19 20 21">Part of a lipid raft complex composed at least of BCL10, CARD11, MALT1 and IKBKB (PubMed:16356855). Interacts with GLRX3 (via N-terminus) (PubMed:10636891). Interacts with ECT2 (PubMed:15254234). Interacts with CCDC88A/GIV; the interaction leads to phosphorylation of CCDC88A and inhibition of its guanine nucleotide exchange factor activity (PubMed:23509302). Interacts with PRKCH upstream open reading frame 2; the interaction leads to inhibition of kinase activity (PubMed:34593629). Interacts with CD28 (PubMed:21964608).</text>
</comment>
<comment type="interaction">
    <interactant intactId="EBI-374762">
        <id>Q04759</id>
    </interactant>
    <interactant intactId="EBI-624835">
        <id>Q06187</id>
        <label>BTK</label>
    </interactant>
    <organismsDiffer>false</organismsDiffer>
    <experiments>2</experiments>
</comment>
<comment type="interaction">
    <interactant intactId="EBI-374762">
        <id>Q04759</id>
    </interactant>
    <interactant intactId="EBI-515315">
        <id>P06241</id>
        <label>FYN</label>
    </interactant>
    <organismsDiffer>false</organismsDiffer>
    <experiments>7</experiments>
</comment>
<comment type="interaction">
    <interactant intactId="EBI-374762">
        <id>Q04759</id>
    </interactant>
    <interactant intactId="EBI-374781">
        <id>O76003</id>
        <label>GLRX3</label>
    </interactant>
    <organismsDiffer>false</organismsDiffer>
    <experiments>5</experiments>
</comment>
<comment type="interaction">
    <interactant intactId="EBI-374762">
        <id>Q04759</id>
    </interactant>
    <interactant intactId="EBI-719620">
        <id>Q00613</id>
        <label>HSF1</label>
    </interactant>
    <organismsDiffer>false</organismsDiffer>
    <experiments>2</experiments>
</comment>
<comment type="interaction">
    <interactant intactId="EBI-374762">
        <id>Q04759</id>
    </interactant>
    <interactant intactId="EBI-1348">
        <id>P06239</id>
        <label>LCK</label>
    </interactant>
    <organismsDiffer>false</organismsDiffer>
    <experiments>2</experiments>
</comment>
<comment type="interaction">
    <interactant intactId="EBI-374762">
        <id>Q04759</id>
    </interactant>
    <interactant intactId="EBI-1758170">
        <id>Q8IVH8</id>
        <label>MAP4K3</label>
    </interactant>
    <organismsDiffer>false</organismsDiffer>
    <experiments>4</experiments>
</comment>
<comment type="interaction">
    <interactant intactId="EBI-374762">
        <id>Q04759</id>
    </interactant>
    <interactant intactId="EBI-295351">
        <id>Q05513</id>
        <label>PRKCZ</label>
    </interactant>
    <organismsDiffer>false</organismsDiffer>
    <experiments>3</experiments>
</comment>
<comment type="interaction">
    <interactant intactId="EBI-374762">
        <id>Q04759</id>
    </interactant>
    <interactant intactId="EBI-520230">
        <id>P35570</id>
        <label>Irs1</label>
    </interactant>
    <organismsDiffer>true</organismsDiffer>
    <experiments>2</experiments>
</comment>
<comment type="subcellular location">
    <subcellularLocation>
        <location>Cytoplasm</location>
    </subcellularLocation>
    <subcellularLocation>
        <location>Cell membrane</location>
        <topology>Peripheral membrane protein</topology>
    </subcellularLocation>
    <text>In resting T-cells, mostly localized in cytoplasm. In response to TCR stimulation, associates with lipid rafts and then localizes in the immunological synapse.</text>
</comment>
<comment type="alternative products">
    <event type="alternative splicing"/>
    <isoform>
        <id>Q04759-1</id>
        <name>1</name>
        <sequence type="displayed"/>
    </isoform>
    <isoform>
        <id>Q04759-2</id>
        <name>2</name>
        <sequence type="described" ref="VSP_017294"/>
    </isoform>
    <isoform>
        <id>Q04759-3</id>
        <name>3</name>
        <sequence type="described" ref="VSP_054550"/>
    </isoform>
</comment>
<comment type="tissue specificity">
    <text evidence="23">Expressed in skeletal muscle, T-cells, megakaryoblastic cells and platelets.</text>
</comment>
<comment type="domain">
    <text>The C1 domain, containing the phorbol ester/DAG-type region 1 (C1A) and 2 (C1B), is the diacylglycerol sensor and the C2 domain is a non-calcium binding domain.</text>
</comment>
<comment type="PTM">
    <text evidence="7 9 13 14 25">Autophosphorylation at Thr-219 is required for targeting to the TCR and cellular function of PRKCQ upon antigen receptor ligation. Following TCR stimulation, phosphorylated at Tyr-90 and Ser-685.</text>
</comment>
<comment type="similarity">
    <text evidence="29">Belongs to the protein kinase superfamily. AGC Ser/Thr protein kinase family. PKC subfamily.</text>
</comment>
<feature type="chain" id="PRO_0000055708" description="Protein kinase C theta type">
    <location>
        <begin position="1"/>
        <end position="706"/>
    </location>
</feature>
<feature type="domain" description="C2" evidence="1">
    <location>
        <begin position="1"/>
        <end position="107"/>
    </location>
</feature>
<feature type="domain" description="Protein kinase" evidence="2">
    <location>
        <begin position="380"/>
        <end position="634"/>
    </location>
</feature>
<feature type="domain" description="AGC-kinase C-terminal" evidence="4">
    <location>
        <begin position="635"/>
        <end position="706"/>
    </location>
</feature>
<feature type="zinc finger region" description="Phorbol-ester/DAG-type 1" evidence="3">
    <location>
        <begin position="159"/>
        <end position="209"/>
    </location>
</feature>
<feature type="zinc finger region" description="Phorbol-ester/DAG-type 2" evidence="3">
    <location>
        <begin position="231"/>
        <end position="281"/>
    </location>
</feature>
<feature type="active site" description="Proton acceptor" evidence="2 5">
    <location>
        <position position="504"/>
    </location>
</feature>
<feature type="binding site" evidence="2">
    <location>
        <begin position="386"/>
        <end position="394"/>
    </location>
    <ligand>
        <name>ATP</name>
        <dbReference type="ChEBI" id="CHEBI:30616"/>
    </ligand>
</feature>
<feature type="binding site">
    <location>
        <position position="409"/>
    </location>
    <ligand>
        <name>ATP</name>
        <dbReference type="ChEBI" id="CHEBI:30616"/>
    </ligand>
</feature>
<feature type="modified residue" description="Phosphotyrosine; by LCK" evidence="7">
    <location>
        <position position="90"/>
    </location>
</feature>
<feature type="modified residue" description="Phosphothreonine; by autocatalysis" evidence="14">
    <location>
        <position position="219"/>
    </location>
</feature>
<feature type="modified residue" description="Phosphoserine" evidence="33">
    <location>
        <position position="348"/>
    </location>
</feature>
<feature type="modified residue" description="Phosphothreonine; by PDPK1" evidence="30 31 32">
    <location>
        <position position="538"/>
    </location>
</feature>
<feature type="modified residue" description="Phosphoserine" evidence="9 14 25 34 37">
    <location>
        <position position="676"/>
    </location>
</feature>
<feature type="modified residue" description="Phosphoserine" evidence="33 35 36 37">
    <location>
        <position position="685"/>
    </location>
</feature>
<feature type="modified residue" description="Phosphoserine" evidence="9 13 14 25 33 34 36 37 38">
    <location>
        <position position="695"/>
    </location>
</feature>
<feature type="splice variant" id="VSP_054550" description="In isoform 3." evidence="27">
    <location>
        <begin position="2"/>
        <end position="126"/>
    </location>
</feature>
<feature type="splice variant" id="VSP_017294" description="In isoform 2." evidence="28">
    <location>
        <begin position="550"/>
        <end position="612"/>
    </location>
</feature>
<feature type="sequence variant" id="VAR_042319" description="In a colorectal adenocarcinoma sample; somatic mutation." evidence="17">
    <original>K</original>
    <variation>N</variation>
    <location>
        <position position="240"/>
    </location>
</feature>
<feature type="sequence variant" id="VAR_042320" description="In dbSNP:rs45590231." evidence="17">
    <original>D</original>
    <variation>V</variation>
    <location>
        <position position="306"/>
    </location>
</feature>
<feature type="sequence variant" id="VAR_020401" description="In dbSNP:rs2236379." evidence="17 23 26">
    <original>P</original>
    <variation>L</variation>
    <location>
        <position position="330"/>
    </location>
</feature>
<feature type="sequence variant" id="VAR_042321" description="In dbSNP:rs34524148." evidence="17">
    <original>D</original>
    <variation>N</variation>
    <location>
        <position position="354"/>
    </location>
</feature>
<feature type="mutagenesis site" description="Loss of function in T-cells proliferation. No effect on kinase activity." evidence="7">
    <original>Y</original>
    <variation>F</variation>
    <location>
        <position position="90"/>
    </location>
</feature>
<feature type="mutagenesis site" description="Constitutively active form." evidence="7">
    <original>A</original>
    <variation>E</variation>
    <location>
        <position position="148"/>
    </location>
</feature>
<feature type="mutagenesis site" description="Loss of transactivation of the IL2 promoter and translocation to the plasma membrane. No effect on kinase activity." evidence="14">
    <original>T</original>
    <variation>A</variation>
    <location>
        <position position="219"/>
    </location>
</feature>
<feature type="mutagenesis site" description="Loss of kinase activity." evidence="7">
    <original>K</original>
    <variation>A</variation>
    <variation>E</variation>
    <location>
        <position position="409"/>
    </location>
</feature>
<feature type="mutagenesis site" description="Loss of kinase activity." evidence="9 14">
    <original>T</original>
    <variation>A</variation>
    <location>
        <position position="538"/>
    </location>
</feature>
<feature type="mutagenesis site" description="Reduction in kinase activity." evidence="14">
    <original>S</original>
    <variation>A</variation>
    <location>
        <position position="676"/>
    </location>
</feature>
<feature type="mutagenesis site" description="Reduction in kinase activity." evidence="9 14">
    <original>S</original>
    <variation>A</variation>
    <location>
        <position position="695"/>
    </location>
</feature>
<feature type="sequence conflict" description="In Ref. 1; AAA75571 and 4; AAU29340." evidence="29" ref="1 4">
    <original>G</original>
    <variation>R</variation>
    <location>
        <position position="700"/>
    </location>
</feature>
<feature type="strand" evidence="40">
    <location>
        <begin position="5"/>
        <end position="13"/>
    </location>
</feature>
<feature type="strand" evidence="40">
    <location>
        <begin position="28"/>
        <end position="39"/>
    </location>
</feature>
<feature type="strand" evidence="40">
    <location>
        <begin position="42"/>
        <end position="52"/>
    </location>
</feature>
<feature type="strand" evidence="40">
    <location>
        <begin position="56"/>
        <end position="62"/>
    </location>
</feature>
<feature type="strand" evidence="40">
    <location>
        <begin position="69"/>
        <end position="75"/>
    </location>
</feature>
<feature type="strand" evidence="40">
    <location>
        <begin position="83"/>
        <end position="89"/>
    </location>
</feature>
<feature type="helix" evidence="40">
    <location>
        <begin position="90"/>
        <end position="98"/>
    </location>
</feature>
<feature type="turn" evidence="40">
    <location>
        <begin position="99"/>
        <end position="101"/>
    </location>
</feature>
<feature type="strand" evidence="40">
    <location>
        <begin position="103"/>
        <end position="108"/>
    </location>
</feature>
<feature type="strand" evidence="40">
    <location>
        <begin position="110"/>
        <end position="112"/>
    </location>
</feature>
<feature type="strand" evidence="40">
    <location>
        <begin position="114"/>
        <end position="121"/>
    </location>
</feature>
<feature type="strand" evidence="41">
    <location>
        <begin position="155"/>
        <end position="159"/>
    </location>
</feature>
<feature type="strand" evidence="41">
    <location>
        <begin position="161"/>
        <end position="165"/>
    </location>
</feature>
<feature type="strand" evidence="41">
    <location>
        <begin position="174"/>
        <end position="176"/>
    </location>
</feature>
<feature type="strand" evidence="41">
    <location>
        <begin position="187"/>
        <end position="189"/>
    </location>
</feature>
<feature type="strand" evidence="41">
    <location>
        <begin position="191"/>
        <end position="193"/>
    </location>
</feature>
<feature type="strand" evidence="41">
    <location>
        <begin position="196"/>
        <end position="199"/>
    </location>
</feature>
<feature type="helix" evidence="41">
    <location>
        <begin position="200"/>
        <end position="202"/>
    </location>
</feature>
<feature type="strand" evidence="42">
    <location>
        <begin position="234"/>
        <end position="236"/>
    </location>
</feature>
<feature type="strand" evidence="42">
    <location>
        <begin position="246"/>
        <end position="248"/>
    </location>
</feature>
<feature type="strand" evidence="42">
    <location>
        <begin position="255"/>
        <end position="257"/>
    </location>
</feature>
<feature type="strand" evidence="42">
    <location>
        <begin position="259"/>
        <end position="265"/>
    </location>
</feature>
<feature type="turn" evidence="42">
    <location>
        <begin position="271"/>
        <end position="276"/>
    </location>
</feature>
<feature type="turn" evidence="42">
    <location>
        <begin position="281"/>
        <end position="283"/>
    </location>
</feature>
<feature type="helix" evidence="43">
    <location>
        <begin position="377"/>
        <end position="379"/>
    </location>
</feature>
<feature type="strand" evidence="39">
    <location>
        <begin position="380"/>
        <end position="388"/>
    </location>
</feature>
<feature type="strand" evidence="39">
    <location>
        <begin position="390"/>
        <end position="399"/>
    </location>
</feature>
<feature type="turn" evidence="39">
    <location>
        <begin position="400"/>
        <end position="402"/>
    </location>
</feature>
<feature type="strand" evidence="39">
    <location>
        <begin position="405"/>
        <end position="412"/>
    </location>
</feature>
<feature type="helix" evidence="39">
    <location>
        <begin position="413"/>
        <end position="418"/>
    </location>
</feature>
<feature type="helix" evidence="39">
    <location>
        <begin position="422"/>
        <end position="435"/>
    </location>
</feature>
<feature type="strand" evidence="39">
    <location>
        <begin position="444"/>
        <end position="449"/>
    </location>
</feature>
<feature type="strand" evidence="39">
    <location>
        <begin position="451"/>
        <end position="459"/>
    </location>
</feature>
<feature type="strand" evidence="43">
    <location>
        <begin position="463"/>
        <end position="465"/>
    </location>
</feature>
<feature type="helix" evidence="39">
    <location>
        <begin position="466"/>
        <end position="473"/>
    </location>
</feature>
<feature type="helix" evidence="39">
    <location>
        <begin position="478"/>
        <end position="497"/>
    </location>
</feature>
<feature type="helix" evidence="39">
    <location>
        <begin position="507"/>
        <end position="509"/>
    </location>
</feature>
<feature type="strand" evidence="39">
    <location>
        <begin position="510"/>
        <end position="512"/>
    </location>
</feature>
<feature type="strand" evidence="39">
    <location>
        <begin position="518"/>
        <end position="520"/>
    </location>
</feature>
<feature type="helix" evidence="39">
    <location>
        <begin position="543"/>
        <end position="545"/>
    </location>
</feature>
<feature type="helix" evidence="39">
    <location>
        <begin position="548"/>
        <end position="551"/>
    </location>
</feature>
<feature type="helix" evidence="39">
    <location>
        <begin position="559"/>
        <end position="574"/>
    </location>
</feature>
<feature type="helix" evidence="39">
    <location>
        <begin position="584"/>
        <end position="593"/>
    </location>
</feature>
<feature type="helix" evidence="39">
    <location>
        <begin position="604"/>
        <end position="613"/>
    </location>
</feature>
<feature type="helix" evidence="39">
    <location>
        <begin position="618"/>
        <end position="620"/>
    </location>
</feature>
<feature type="helix" evidence="39">
    <location>
        <begin position="628"/>
        <end position="630"/>
    </location>
</feature>
<feature type="helix" evidence="39">
    <location>
        <begin position="632"/>
        <end position="634"/>
    </location>
</feature>
<feature type="helix" evidence="39">
    <location>
        <begin position="639"/>
        <end position="643"/>
    </location>
</feature>
<feature type="helix" evidence="43">
    <location>
        <begin position="666"/>
        <end position="669"/>
    </location>
</feature>
<feature type="helix" evidence="43">
    <location>
        <begin position="680"/>
        <end position="685"/>
    </location>
</feature>
<feature type="turn" evidence="39">
    <location>
        <begin position="690"/>
        <end position="693"/>
    </location>
</feature>
<feature type="helix" evidence="43">
    <location>
        <begin position="699"/>
        <end position="706"/>
    </location>
</feature>
<reference key="1">
    <citation type="journal article" date="1993" name="J. Biol. Chem.">
        <title>Molecular cloning and expression of a cDNA encoding a novel isoenzyme of protein kinase C (nPKC). A new member of the nPKC family expressed in skeletal muscle, megakaryoblastic cells, and platelets.</title>
        <authorList>
            <person name="Chang J.D."/>
            <person name="Xu Y."/>
            <person name="Raychowdhury M.K."/>
            <person name="Ware J.A."/>
        </authorList>
    </citation>
    <scope>NUCLEOTIDE SEQUENCE [MRNA] (ISOFORM 1)</scope>
    <scope>TISSUE SPECIFICITY</scope>
    <scope>VARIANT LEU-330</scope>
</reference>
<reference key="2">
    <citation type="journal article" date="1994" name="J. Biol. Chem.">
        <authorList>
            <person name="Chang J.D."/>
            <person name="Xu Y."/>
            <person name="Raychowdhury M.K."/>
            <person name="Ware J.A."/>
        </authorList>
    </citation>
    <scope>ERRATUM OF PUBMED:7686153</scope>
    <scope>SEQUENCE REVISION</scope>
</reference>
<reference key="3">
    <citation type="journal article" date="1993" name="J. Biol. Chem.">
        <title>Molecular cloning and characterization of PKC theta, a novel member of the protein kinase C (PKC) gene family expressed predominantly in hematopoietic cells.</title>
        <authorList>
            <person name="Baier G."/>
            <person name="Telford D."/>
            <person name="Giampa L."/>
            <person name="Coggeshall K.M."/>
            <person name="Baier-Bitterlich G."/>
            <person name="Isakov N."/>
            <person name="Altman A."/>
        </authorList>
    </citation>
    <scope>NUCLEOTIDE SEQUENCE [MRNA] (ISOFORM 1)</scope>
    <source>
        <tissue>Blood</tissue>
    </source>
</reference>
<reference key="4">
    <citation type="submission" date="2004-07" db="EMBL/GenBank/DDBJ databases">
        <authorList>
            <person name="Li H."/>
            <person name="Ke R."/>
            <person name="Zhou G."/>
            <person name="Shen C."/>
            <person name="Zhong G."/>
            <person name="Lin L."/>
            <person name="Yang S."/>
        </authorList>
    </citation>
    <scope>NUCLEOTIDE SEQUENCE [MRNA] (ISOFORM 2)</scope>
    <scope>VARIANT LEU-330</scope>
</reference>
<reference key="5">
    <citation type="journal article" date="2004" name="Nat. Genet.">
        <title>Complete sequencing and characterization of 21,243 full-length human cDNAs.</title>
        <authorList>
            <person name="Ota T."/>
            <person name="Suzuki Y."/>
            <person name="Nishikawa T."/>
            <person name="Otsuki T."/>
            <person name="Sugiyama T."/>
            <person name="Irie R."/>
            <person name="Wakamatsu A."/>
            <person name="Hayashi K."/>
            <person name="Sato H."/>
            <person name="Nagai K."/>
            <person name="Kimura K."/>
            <person name="Makita H."/>
            <person name="Sekine M."/>
            <person name="Obayashi M."/>
            <person name="Nishi T."/>
            <person name="Shibahara T."/>
            <person name="Tanaka T."/>
            <person name="Ishii S."/>
            <person name="Yamamoto J."/>
            <person name="Saito K."/>
            <person name="Kawai Y."/>
            <person name="Isono Y."/>
            <person name="Nakamura Y."/>
            <person name="Nagahari K."/>
            <person name="Murakami K."/>
            <person name="Yasuda T."/>
            <person name="Iwayanagi T."/>
            <person name="Wagatsuma M."/>
            <person name="Shiratori A."/>
            <person name="Sudo H."/>
            <person name="Hosoiri T."/>
            <person name="Kaku Y."/>
            <person name="Kodaira H."/>
            <person name="Kondo H."/>
            <person name="Sugawara M."/>
            <person name="Takahashi M."/>
            <person name="Kanda K."/>
            <person name="Yokoi T."/>
            <person name="Furuya T."/>
            <person name="Kikkawa E."/>
            <person name="Omura Y."/>
            <person name="Abe K."/>
            <person name="Kamihara K."/>
            <person name="Katsuta N."/>
            <person name="Sato K."/>
            <person name="Tanikawa M."/>
            <person name="Yamazaki M."/>
            <person name="Ninomiya K."/>
            <person name="Ishibashi T."/>
            <person name="Yamashita H."/>
            <person name="Murakawa K."/>
            <person name="Fujimori K."/>
            <person name="Tanai H."/>
            <person name="Kimata M."/>
            <person name="Watanabe M."/>
            <person name="Hiraoka S."/>
            <person name="Chiba Y."/>
            <person name="Ishida S."/>
            <person name="Ono Y."/>
            <person name="Takiguchi S."/>
            <person name="Watanabe S."/>
            <person name="Yosida M."/>
            <person name="Hotuta T."/>
            <person name="Kusano J."/>
            <person name="Kanehori K."/>
            <person name="Takahashi-Fujii A."/>
            <person name="Hara H."/>
            <person name="Tanase T.-O."/>
            <person name="Nomura Y."/>
            <person name="Togiya S."/>
            <person name="Komai F."/>
            <person name="Hara R."/>
            <person name="Takeuchi K."/>
            <person name="Arita M."/>
            <person name="Imose N."/>
            <person name="Musashino K."/>
            <person name="Yuuki H."/>
            <person name="Oshima A."/>
            <person name="Sasaki N."/>
            <person name="Aotsuka S."/>
            <person name="Yoshikawa Y."/>
            <person name="Matsunawa H."/>
            <person name="Ichihara T."/>
            <person name="Shiohata N."/>
            <person name="Sano S."/>
            <person name="Moriya S."/>
            <person name="Momiyama H."/>
            <person name="Satoh N."/>
            <person name="Takami S."/>
            <person name="Terashima Y."/>
            <person name="Suzuki O."/>
            <person name="Nakagawa S."/>
            <person name="Senoh A."/>
            <person name="Mizoguchi H."/>
            <person name="Goto Y."/>
            <person name="Shimizu F."/>
            <person name="Wakebe H."/>
            <person name="Hishigaki H."/>
            <person name="Watanabe T."/>
            <person name="Sugiyama A."/>
            <person name="Takemoto M."/>
            <person name="Kawakami B."/>
            <person name="Yamazaki M."/>
            <person name="Watanabe K."/>
            <person name="Kumagai A."/>
            <person name="Itakura S."/>
            <person name="Fukuzumi Y."/>
            <person name="Fujimori Y."/>
            <person name="Komiyama M."/>
            <person name="Tashiro H."/>
            <person name="Tanigami A."/>
            <person name="Fujiwara T."/>
            <person name="Ono T."/>
            <person name="Yamada K."/>
            <person name="Fujii Y."/>
            <person name="Ozaki K."/>
            <person name="Hirao M."/>
            <person name="Ohmori Y."/>
            <person name="Kawabata A."/>
            <person name="Hikiji T."/>
            <person name="Kobatake N."/>
            <person name="Inagaki H."/>
            <person name="Ikema Y."/>
            <person name="Okamoto S."/>
            <person name="Okitani R."/>
            <person name="Kawakami T."/>
            <person name="Noguchi S."/>
            <person name="Itoh T."/>
            <person name="Shigeta K."/>
            <person name="Senba T."/>
            <person name="Matsumura K."/>
            <person name="Nakajima Y."/>
            <person name="Mizuno T."/>
            <person name="Morinaga M."/>
            <person name="Sasaki M."/>
            <person name="Togashi T."/>
            <person name="Oyama M."/>
            <person name="Hata H."/>
            <person name="Watanabe M."/>
            <person name="Komatsu T."/>
            <person name="Mizushima-Sugano J."/>
            <person name="Satoh T."/>
            <person name="Shirai Y."/>
            <person name="Takahashi Y."/>
            <person name="Nakagawa K."/>
            <person name="Okumura K."/>
            <person name="Nagase T."/>
            <person name="Nomura N."/>
            <person name="Kikuchi H."/>
            <person name="Masuho Y."/>
            <person name="Yamashita R."/>
            <person name="Nakai K."/>
            <person name="Yada T."/>
            <person name="Nakamura Y."/>
            <person name="Ohara O."/>
            <person name="Isogai T."/>
            <person name="Sugano S."/>
        </authorList>
    </citation>
    <scope>NUCLEOTIDE SEQUENCE [LARGE SCALE MRNA] (ISOFORM 3)</scope>
    <source>
        <tissue>Cerebellum</tissue>
    </source>
</reference>
<reference key="6">
    <citation type="journal article" date="2004" name="Nature">
        <title>The DNA sequence and comparative analysis of human chromosome 10.</title>
        <authorList>
            <person name="Deloukas P."/>
            <person name="Earthrowl M.E."/>
            <person name="Grafham D.V."/>
            <person name="Rubenfield M."/>
            <person name="French L."/>
            <person name="Steward C.A."/>
            <person name="Sims S.K."/>
            <person name="Jones M.C."/>
            <person name="Searle S."/>
            <person name="Scott C."/>
            <person name="Howe K."/>
            <person name="Hunt S.E."/>
            <person name="Andrews T.D."/>
            <person name="Gilbert J.G.R."/>
            <person name="Swarbreck D."/>
            <person name="Ashurst J.L."/>
            <person name="Taylor A."/>
            <person name="Battles J."/>
            <person name="Bird C.P."/>
            <person name="Ainscough R."/>
            <person name="Almeida J.P."/>
            <person name="Ashwell R.I.S."/>
            <person name="Ambrose K.D."/>
            <person name="Babbage A.K."/>
            <person name="Bagguley C.L."/>
            <person name="Bailey J."/>
            <person name="Banerjee R."/>
            <person name="Bates K."/>
            <person name="Beasley H."/>
            <person name="Bray-Allen S."/>
            <person name="Brown A.J."/>
            <person name="Brown J.Y."/>
            <person name="Burford D.C."/>
            <person name="Burrill W."/>
            <person name="Burton J."/>
            <person name="Cahill P."/>
            <person name="Camire D."/>
            <person name="Carter N.P."/>
            <person name="Chapman J.C."/>
            <person name="Clark S.Y."/>
            <person name="Clarke G."/>
            <person name="Clee C.M."/>
            <person name="Clegg S."/>
            <person name="Corby N."/>
            <person name="Coulson A."/>
            <person name="Dhami P."/>
            <person name="Dutta I."/>
            <person name="Dunn M."/>
            <person name="Faulkner L."/>
            <person name="Frankish A."/>
            <person name="Frankland J.A."/>
            <person name="Garner P."/>
            <person name="Garnett J."/>
            <person name="Gribble S."/>
            <person name="Griffiths C."/>
            <person name="Grocock R."/>
            <person name="Gustafson E."/>
            <person name="Hammond S."/>
            <person name="Harley J.L."/>
            <person name="Hart E."/>
            <person name="Heath P.D."/>
            <person name="Ho T.P."/>
            <person name="Hopkins B."/>
            <person name="Horne J."/>
            <person name="Howden P.J."/>
            <person name="Huckle E."/>
            <person name="Hynds C."/>
            <person name="Johnson C."/>
            <person name="Johnson D."/>
            <person name="Kana A."/>
            <person name="Kay M."/>
            <person name="Kimberley A.M."/>
            <person name="Kershaw J.K."/>
            <person name="Kokkinaki M."/>
            <person name="Laird G.K."/>
            <person name="Lawlor S."/>
            <person name="Lee H.M."/>
            <person name="Leongamornlert D.A."/>
            <person name="Laird G."/>
            <person name="Lloyd C."/>
            <person name="Lloyd D.M."/>
            <person name="Loveland J."/>
            <person name="Lovell J."/>
            <person name="McLaren S."/>
            <person name="McLay K.E."/>
            <person name="McMurray A."/>
            <person name="Mashreghi-Mohammadi M."/>
            <person name="Matthews L."/>
            <person name="Milne S."/>
            <person name="Nickerson T."/>
            <person name="Nguyen M."/>
            <person name="Overton-Larty E."/>
            <person name="Palmer S.A."/>
            <person name="Pearce A.V."/>
            <person name="Peck A.I."/>
            <person name="Pelan S."/>
            <person name="Phillimore B."/>
            <person name="Porter K."/>
            <person name="Rice C.M."/>
            <person name="Rogosin A."/>
            <person name="Ross M.T."/>
            <person name="Sarafidou T."/>
            <person name="Sehra H.K."/>
            <person name="Shownkeen R."/>
            <person name="Skuce C.D."/>
            <person name="Smith M."/>
            <person name="Standring L."/>
            <person name="Sycamore N."/>
            <person name="Tester J."/>
            <person name="Thorpe A."/>
            <person name="Torcasso W."/>
            <person name="Tracey A."/>
            <person name="Tromans A."/>
            <person name="Tsolas J."/>
            <person name="Wall M."/>
            <person name="Walsh J."/>
            <person name="Wang H."/>
            <person name="Weinstock K."/>
            <person name="West A.P."/>
            <person name="Willey D.L."/>
            <person name="Whitehead S.L."/>
            <person name="Wilming L."/>
            <person name="Wray P.W."/>
            <person name="Young L."/>
            <person name="Chen Y."/>
            <person name="Lovering R.C."/>
            <person name="Moschonas N.K."/>
            <person name="Siebert R."/>
            <person name="Fechtel K."/>
            <person name="Bentley D."/>
            <person name="Durbin R.M."/>
            <person name="Hubbard T."/>
            <person name="Doucette-Stamm L."/>
            <person name="Beck S."/>
            <person name="Smith D.R."/>
            <person name="Rogers J."/>
        </authorList>
    </citation>
    <scope>NUCLEOTIDE SEQUENCE [LARGE SCALE GENOMIC DNA]</scope>
</reference>
<reference key="7">
    <citation type="journal article" date="2004" name="Genome Res.">
        <title>The status, quality, and expansion of the NIH full-length cDNA project: the Mammalian Gene Collection (MGC).</title>
        <authorList>
            <consortium name="The MGC Project Team"/>
        </authorList>
    </citation>
    <scope>NUCLEOTIDE SEQUENCE [LARGE SCALE MRNA] (ISOFORM 1)</scope>
    <source>
        <tissue>Brain</tissue>
    </source>
</reference>
<reference key="8">
    <citation type="journal article" date="1996" name="Mol. Cell. Biol.">
        <title>Protein kinase C-theta isoenzyme selective stimulation of the transcription factor complex AP-1 in T lymphocytes.</title>
        <authorList>
            <person name="Baier-Bitterlich G."/>
            <person name="Uberall F."/>
            <person name="Bauer B."/>
            <person name="Fresser F."/>
            <person name="Wachter H."/>
            <person name="Grunicke H."/>
            <person name="Utermann G."/>
            <person name="Altman A."/>
            <person name="Baier G."/>
        </authorList>
    </citation>
    <scope>FUNCTION IN ACTIVATION OF JUN</scope>
</reference>
<reference key="9">
    <citation type="journal article" date="2000" name="J. Biol. Chem.">
        <title>Inhibition of the c-Jun N-terminal kinase/AP-1 and NF-kappaB pathways by PICOT, a novel protein kinase C-interacting protein with a thioredoxin homology domain.</title>
        <authorList>
            <person name="Witte S."/>
            <person name="Villalba M."/>
            <person name="Bi K."/>
            <person name="Liu Y."/>
            <person name="Isakov N."/>
            <person name="Altman A."/>
        </authorList>
    </citation>
    <scope>INTERACTION WITH GLRX3</scope>
</reference>
<reference key="10">
    <citation type="journal article" date="2000" name="J. Biol. Chem.">
        <title>Regulation of protein kinase Ctheta function during T cell activation by Lck-mediated tyrosine phosphorylation.</title>
        <authorList>
            <person name="Liu Y."/>
            <person name="Witte S."/>
            <person name="Liu Y.C."/>
            <person name="Doyle M."/>
            <person name="Elly C."/>
            <person name="Altman A."/>
        </authorList>
    </citation>
    <scope>PHOSPHORYLATION AT TYR-90</scope>
    <scope>MUTAGENESIS OF TYR-90; ALA-148 AND LYS-409</scope>
</reference>
<reference key="11">
    <citation type="journal article" date="2001" name="J. Immunol.">
        <title>Protein kinase C-theta mediates a selective T cell survival signal via phosphorylation of BAD.</title>
        <authorList>
            <person name="Villalba M."/>
            <person name="Bushway P."/>
            <person name="Altman A."/>
        </authorList>
    </citation>
    <scope>FUNCTION IN PHOSPHORYLATION OF BAD</scope>
</reference>
<reference key="12">
    <citation type="journal article" date="2002" name="Biochem. J.">
        <title>Phosphorylation of the protein kinase C-theta activation loop and hydrophobic motif regulates its kinase activity, but only activation loop phosphorylation is critical to in vivo nuclear-factor-kappaB induction.</title>
        <authorList>
            <person name="Liu Y."/>
            <person name="Graham C."/>
            <person name="Li A."/>
            <person name="Fisher R.J."/>
            <person name="Shaw S."/>
        </authorList>
    </citation>
    <scope>PHOSPHORYLATION AT THR-538; SER-676 AND SER-695</scope>
    <scope>MUTAGENESIS OF THR-538 AND SER-695</scope>
</reference>
<reference key="13">
    <citation type="journal article" date="2004" name="EMBO J.">
        <title>SPAK kinase is a substrate and target of PKCtheta in T-cell receptor-induced AP-1 activation pathway.</title>
        <authorList>
            <person name="Li Y."/>
            <person name="Hu J."/>
            <person name="Vita R."/>
            <person name="Sun B."/>
            <person name="Tabata H."/>
            <person name="Altman A."/>
        </authorList>
    </citation>
    <scope>FUNCTION IN PHOSPHORYLATION OF STK39/SPAK</scope>
</reference>
<reference key="14">
    <citation type="journal article" date="2004" name="J. Biol. Chem.">
        <title>Protein kinase C Theta inhibits insulin signaling by phosphorylating IRS1 at Ser(1101).</title>
        <authorList>
            <person name="Li Y."/>
            <person name="Soos T.J."/>
            <person name="Li X."/>
            <person name="Wu J."/>
            <person name="Degennaro M."/>
            <person name="Sun X."/>
            <person name="Littman D.R."/>
            <person name="Birnbaum M.J."/>
            <person name="Polakiewicz R.D."/>
        </authorList>
    </citation>
    <scope>FUNCTION IN PHOSPHORYLATION OF IRS1</scope>
</reference>
<reference key="15">
    <citation type="journal article" date="2004" name="Mol. Cell. Biol.">
        <title>Nucleotide exchange factor ECT2 interacts with the polarity protein complex Par6/Par3/protein kinase Czeta (PKCzeta) and regulates PKCzeta activity.</title>
        <authorList>
            <person name="Liu X.F."/>
            <person name="Ishida H."/>
            <person name="Raziuddin R."/>
            <person name="Miki T."/>
        </authorList>
    </citation>
    <scope>INTERACTION WITH ECT2</scope>
</reference>
<reference key="16">
    <citation type="journal article" date="2005" name="EMBO J.">
        <title>Critical role of novel Thr-219 autophosphorylation for the cellular function of PKCtheta in T lymphocytes.</title>
        <authorList>
            <person name="Thuille N."/>
            <person name="Heit I."/>
            <person name="Fresser F."/>
            <person name="Krumbock N."/>
            <person name="Bauer B."/>
            <person name="Leuthaeusser S."/>
            <person name="Dammeier S."/>
            <person name="Graham C."/>
            <person name="Copeland T.D."/>
            <person name="Shaw S."/>
            <person name="Baier G."/>
        </authorList>
    </citation>
    <scope>FUNCTION</scope>
    <scope>PHOSPHORYLATION AT THR-219; THR-538; SER-676 AND SER-695</scope>
    <scope>MUTAGENESIS OF THR-219; THR-538; SER-676 AND SER-695</scope>
</reference>
<reference key="17">
    <citation type="journal article" date="2005" name="Immunity">
        <title>Phosphorylation of the CARMA1 linker controls NF-kappaB activation.</title>
        <authorList>
            <person name="Sommer K."/>
            <person name="Guo B."/>
            <person name="Pomerantz J.L."/>
            <person name="Bandaranayake A.D."/>
            <person name="Moreno-Garcia M.E."/>
            <person name="Ovechkina Y.L."/>
            <person name="Rawlings D.J."/>
        </authorList>
    </citation>
    <scope>FUNCTION IN PHOSPHORYLATION OF CARD11</scope>
    <scope>SUBUNIT</scope>
</reference>
<reference key="18">
    <citation type="journal article" date="2006" name="J. Immunol.">
        <title>Protein kinase C-theta-mediated signals enhance CD4+ T cell survival by up-regulating Bcl-xL.</title>
        <authorList>
            <person name="Manicassamy S."/>
            <person name="Gupta S."/>
            <person name="Huang Z."/>
            <person name="Sun Z."/>
        </authorList>
    </citation>
    <scope>FUNCTION IN ACTIVATION OF BCL-X(L)/BCL2L1</scope>
</reference>
<reference key="19">
    <citation type="journal article" date="2008" name="Mol. Cell">
        <title>Kinase-selective enrichment enables quantitative phosphoproteomics of the kinome across the cell cycle.</title>
        <authorList>
            <person name="Daub H."/>
            <person name="Olsen J.V."/>
            <person name="Bairlein M."/>
            <person name="Gnad F."/>
            <person name="Oppermann F.S."/>
            <person name="Korner R."/>
            <person name="Greff Z."/>
            <person name="Keri G."/>
            <person name="Stemmann O."/>
            <person name="Mann M."/>
        </authorList>
    </citation>
    <scope>PHOSPHORYLATION [LARGE SCALE ANALYSIS] AT SER-348; SER-685 AND SER-695</scope>
    <scope>IDENTIFICATION BY MASS SPECTROMETRY [LARGE SCALE ANALYSIS]</scope>
    <source>
        <tissue>Cervix carcinoma</tissue>
    </source>
</reference>
<reference key="20">
    <citation type="journal article" date="2009" name="Mol. Cell. Proteomics">
        <title>Large-scale proteomics analysis of the human kinome.</title>
        <authorList>
            <person name="Oppermann F.S."/>
            <person name="Gnad F."/>
            <person name="Olsen J.V."/>
            <person name="Hornberger R."/>
            <person name="Greff Z."/>
            <person name="Keri G."/>
            <person name="Mann M."/>
            <person name="Daub H."/>
        </authorList>
    </citation>
    <scope>PHOSPHORYLATION [LARGE SCALE ANALYSIS] AT SER-676 AND SER-695</scope>
    <scope>IDENTIFICATION BY MASS SPECTROMETRY [LARGE SCALE ANALYSIS]</scope>
</reference>
<reference key="21">
    <citation type="journal article" date="2009" name="Sci. Signal.">
        <title>PKC-theta modulates the strength of T cell responses by targeting Cbl-b for ubiquitination and degradation.</title>
        <authorList>
            <person name="Gruber T."/>
            <person name="Hermann-Kleiter N."/>
            <person name="Hinterleitner R."/>
            <person name="Fresser F."/>
            <person name="Schneider R."/>
            <person name="Gastl G."/>
            <person name="Penninger J.M."/>
            <person name="Baier G."/>
        </authorList>
    </citation>
    <scope>FUNCTION IN PHOSPHORYLATION OF CBLB</scope>
</reference>
<reference key="22">
    <citation type="journal article" date="2011" name="Nat. Immunol.">
        <title>A motif in the V3 domain of the kinase PKC-theta determines its localization in the immunological synapse and functions in T cells via association with CD28.</title>
        <authorList>
            <person name="Kong K.F."/>
            <person name="Yokosuka T."/>
            <person name="Canonigo-Balancio A.J."/>
            <person name="Isakov N."/>
            <person name="Saito T."/>
            <person name="Altman A."/>
        </authorList>
    </citation>
    <scope>FUNCTION</scope>
    <scope>INTERACTION WITH CD28</scope>
</reference>
<reference key="23">
    <citation type="journal article" date="2002" name="Annu. Rev. Immunol.">
        <title>Protein kinase C(theta) in T cell activation.</title>
        <authorList>
            <person name="Isakov N."/>
            <person name="Altman A."/>
        </authorList>
    </citation>
    <scope>REVIEW ON FUNCTION</scope>
</reference>
<reference key="24">
    <citation type="journal article" date="2002" name="J. Biochem.">
        <title>Protein kinase C-theta (PKC theta): a key enzyme in T cell life and death.</title>
        <authorList>
            <person name="Altman A."/>
            <person name="Villalba M."/>
        </authorList>
    </citation>
    <scope>REVIEW ON FUNCTION</scope>
</reference>
<reference key="25">
    <citation type="journal article" date="2004" name="Nat. Immunol.">
        <title>Protein kinase C and beyond.</title>
        <authorList>
            <person name="Spitaler M."/>
            <person name="Cantrell D.A."/>
        </authorList>
    </citation>
    <scope>REVIEW</scope>
</reference>
<reference key="26">
    <citation type="journal article" date="2006" name="Cell. Mol. Immunol.">
        <title>Selective function of PKC-theta in T cells.</title>
        <authorList>
            <person name="Manicassamy S."/>
            <person name="Gupta S."/>
            <person name="Sun Z."/>
        </authorList>
    </citation>
    <scope>REVIEW ON FUNCTION</scope>
</reference>
<reference key="27">
    <citation type="journal article" date="2007" name="Pharmacol. Res.">
        <title>Protein kinase C theta (PKCtheta): a key player in T cell life and death.</title>
        <authorList>
            <person name="Hayashi K."/>
            <person name="Altman A."/>
        </authorList>
    </citation>
    <scope>REVIEW ON FUNCTION</scope>
</reference>
<reference key="28">
    <citation type="journal article" date="2008" name="Trends Immunol.">
        <title>T-cell fate and function: PKC-theta and beyond.</title>
        <authorList>
            <person name="Marsland B.J."/>
            <person name="Kopf M."/>
        </authorList>
    </citation>
    <scope>REVIEW ON FUNCTION</scope>
</reference>
<reference key="29">
    <citation type="journal article" date="2009" name="Sci. Signal.">
        <title>Quantitative phosphoproteomic analysis of T cell receptor signaling reveals system-wide modulation of protein-protein interactions.</title>
        <authorList>
            <person name="Mayya V."/>
            <person name="Lundgren D.H."/>
            <person name="Hwang S.-I."/>
            <person name="Rezaul K."/>
            <person name="Wu L."/>
            <person name="Eng J.K."/>
            <person name="Rodionov V."/>
            <person name="Han D.K."/>
        </authorList>
    </citation>
    <scope>PHOSPHORYLATION [LARGE SCALE ANALYSIS] AT SER-685</scope>
    <scope>IDENTIFICATION BY MASS SPECTROMETRY [LARGE SCALE ANALYSIS]</scope>
    <source>
        <tissue>Leukemic T-cell</tissue>
    </source>
</reference>
<reference key="30">
    <citation type="journal article" date="2011" name="BMC Syst. Biol.">
        <title>Initial characterization of the human central proteome.</title>
        <authorList>
            <person name="Burkard T.R."/>
            <person name="Planyavsky M."/>
            <person name="Kaupe I."/>
            <person name="Breitwieser F.P."/>
            <person name="Buerckstuemmer T."/>
            <person name="Bennett K.L."/>
            <person name="Superti-Furga G."/>
            <person name="Colinge J."/>
        </authorList>
    </citation>
    <scope>IDENTIFICATION BY MASS SPECTROMETRY [LARGE SCALE ANALYSIS]</scope>
</reference>
<reference key="31">
    <citation type="journal article" date="2011" name="FEBS Lett.">
        <title>Protein kinase C-theta in platelet activation.</title>
        <authorList>
            <person name="Cohen S."/>
            <person name="Braiman A."/>
            <person name="Shubinsky G."/>
            <person name="Isakov N."/>
        </authorList>
    </citation>
    <scope>REVIEW ON FUNCTION IN PLATELET ACTIVATION</scope>
</reference>
<reference key="32">
    <citation type="journal article" date="2011" name="Sci. Signal.">
        <title>System-wide temporal characterization of the proteome and phosphoproteome of human embryonic stem cell differentiation.</title>
        <authorList>
            <person name="Rigbolt K.T."/>
            <person name="Prokhorova T.A."/>
            <person name="Akimov V."/>
            <person name="Henningsen J."/>
            <person name="Johansen P.T."/>
            <person name="Kratchmarova I."/>
            <person name="Kassem M."/>
            <person name="Mann M."/>
            <person name="Olsen J.V."/>
            <person name="Blagoev B."/>
        </authorList>
    </citation>
    <scope>PHOSPHORYLATION [LARGE SCALE ANALYSIS] AT SER-685 AND SER-695</scope>
    <scope>IDENTIFICATION BY MASS SPECTROMETRY [LARGE SCALE ANALYSIS]</scope>
</reference>
<reference key="33">
    <citation type="journal article" date="2013" name="J. Proteome Res.">
        <title>Toward a comprehensive characterization of a human cancer cell phosphoproteome.</title>
        <authorList>
            <person name="Zhou H."/>
            <person name="Di Palma S."/>
            <person name="Preisinger C."/>
            <person name="Peng M."/>
            <person name="Polat A.N."/>
            <person name="Heck A.J."/>
            <person name="Mohammed S."/>
        </authorList>
    </citation>
    <scope>PHOSPHORYLATION [LARGE SCALE ANALYSIS] AT SER-676; SER-685 AND SER-695</scope>
    <scope>IDENTIFICATION BY MASS SPECTROMETRY [LARGE SCALE ANALYSIS]</scope>
    <source>
        <tissue>Cervix carcinoma</tissue>
        <tissue>Erythroleukemia</tissue>
    </source>
</reference>
<reference key="34">
    <citation type="journal article" date="2013" name="Proc. Natl. Acad. Sci. U.S.A.">
        <title>Protein kinase C-theta (PKCtheta) phosphorylates and inhibits the guanine exchange factor, GIV/Girdin.</title>
        <authorList>
            <person name="Lopez-Sanchez I."/>
            <person name="Garcia-Marcos M."/>
            <person name="Mittal Y."/>
            <person name="Aznar N."/>
            <person name="Farquhar M.G."/>
            <person name="Ghosh P."/>
        </authorList>
    </citation>
    <scope>FUNCTION</scope>
    <scope>CATALYTIC ACTIVITY</scope>
    <scope>INTERACTION WITH CCDC88A</scope>
</reference>
<reference key="35">
    <citation type="journal article" date="2014" name="J. Proteomics">
        <title>An enzyme assisted RP-RPLC approach for in-depth analysis of human liver phosphoproteome.</title>
        <authorList>
            <person name="Bian Y."/>
            <person name="Song C."/>
            <person name="Cheng K."/>
            <person name="Dong M."/>
            <person name="Wang F."/>
            <person name="Huang J."/>
            <person name="Sun D."/>
            <person name="Wang L."/>
            <person name="Ye M."/>
            <person name="Zou H."/>
        </authorList>
    </citation>
    <scope>PHOSPHORYLATION [LARGE SCALE ANALYSIS] AT SER-695</scope>
    <scope>IDENTIFICATION BY MASS SPECTROMETRY [LARGE SCALE ANALYSIS]</scope>
    <source>
        <tissue>Liver</tissue>
    </source>
</reference>
<reference key="36">
    <citation type="journal article" date="2021" name="Proc. Natl. Acad. Sci. U.S.A.">
        <title>Unraveling the hidden role of a uORF-encoded peptide as a kinase inhibitor of PKCs.</title>
        <authorList>
            <person name="Jayaram D.R."/>
            <person name="Frost S."/>
            <person name="Argov C."/>
            <person name="Liju V.B."/>
            <person name="Anto N.P."/>
            <person name="Muraleedharan A."/>
            <person name="Ben-Ari A."/>
            <person name="Sinay R."/>
            <person name="Smoly I."/>
            <person name="Novoplansky O."/>
            <person name="Isakov N."/>
            <person name="Toiber D."/>
            <person name="Keasar C."/>
            <person name="Elkabets M."/>
            <person name="Yeger-Lotem E."/>
            <person name="Livneh E."/>
        </authorList>
    </citation>
    <scope>CATALYTIC ACTIVITY</scope>
    <scope>ACTIVITY REGULATION</scope>
    <scope>INTERACTION WITH PRKCH UPSTREAM OPEN READING FRAME 2</scope>
</reference>
<reference key="37">
    <citation type="journal article" date="2022" name="Biochem. J.">
        <title>PKC isoforms activate LRRK1 kinase by phosphorylating conserved residues (Ser1064, Ser1074 and Thr1075) within the CORB GTPase domain.</title>
        <authorList>
            <person name="Malik A.U."/>
            <person name="Karapetsas A."/>
            <person name="Nirujogi R.S."/>
            <person name="Chatterjee D."/>
            <person name="Phung T.K."/>
            <person name="Wightman M."/>
            <person name="Gourlay R."/>
            <person name="Morrice N."/>
            <person name="Mathea S."/>
            <person name="Knapp S."/>
            <person name="Alessi D.R."/>
        </authorList>
    </citation>
    <scope>FUNCTION IN PHOSPHORYLATION OF LRRK1</scope>
</reference>
<reference key="38">
    <citation type="journal article" date="2004" name="J. Biol. Chem.">
        <title>Catalytic domain crystal structure of protein kinase C-theta (PKCtheta).</title>
        <authorList>
            <person name="Xu Z.B."/>
            <person name="Chaudhary D."/>
            <person name="Olland S."/>
            <person name="Wolfrom S."/>
            <person name="Czerwinski R."/>
            <person name="Malakian K."/>
            <person name="Lin L."/>
            <person name="Stahl M.L."/>
            <person name="Joseph-McCarthy D."/>
            <person name="Benander C."/>
            <person name="Fitz L."/>
            <person name="Greco R."/>
            <person name="Somers W.S."/>
            <person name="Mosyak L."/>
        </authorList>
    </citation>
    <scope>X-RAY CRYSTALLOGRAPHY (2.00 ANGSTROMS) OF 362-706</scope>
    <scope>PHOSPHORYLATION AT THR-538 AND SER-695</scope>
</reference>
<reference key="39">
    <citation type="submission" date="2007-01" db="PDB data bank">
        <title>The crystal structure of the kinase domain of the protein kinase C theta in complex with Nvp-Xaa228.</title>
        <authorList>
            <person name="Stark W."/>
            <person name="Bitsch F."/>
            <person name="Berner A."/>
            <person name="Buelens F."/>
            <person name="Graff P."/>
            <person name="Depersin H."/>
            <person name="Fendrich G."/>
            <person name="Geiser M."/>
            <person name="Knecht R."/>
            <person name="Rahuel J."/>
            <person name="Rummel G."/>
            <person name="Schlaeppi J.M."/>
            <person name="Schmitz R."/>
            <person name="Strauss A."/>
            <person name="Wagner J."/>
        </authorList>
    </citation>
    <scope>X-RAY CRYSTALLOGRAPHY (2.32 ANGSTROMS) OF 361-706</scope>
    <scope>PHOSPHORYLATION AT SER-676 AND SER-695</scope>
</reference>
<reference key="40">
    <citation type="journal article" date="2007" name="Nature">
        <title>Patterns of somatic mutation in human cancer genomes.</title>
        <authorList>
            <person name="Greenman C."/>
            <person name="Stephens P."/>
            <person name="Smith R."/>
            <person name="Dalgliesh G.L."/>
            <person name="Hunter C."/>
            <person name="Bignell G."/>
            <person name="Davies H."/>
            <person name="Teague J."/>
            <person name="Butler A."/>
            <person name="Stevens C."/>
            <person name="Edkins S."/>
            <person name="O'Meara S."/>
            <person name="Vastrik I."/>
            <person name="Schmidt E.E."/>
            <person name="Avis T."/>
            <person name="Barthorpe S."/>
            <person name="Bhamra G."/>
            <person name="Buck G."/>
            <person name="Choudhury B."/>
            <person name="Clements J."/>
            <person name="Cole J."/>
            <person name="Dicks E."/>
            <person name="Forbes S."/>
            <person name="Gray K."/>
            <person name="Halliday K."/>
            <person name="Harrison R."/>
            <person name="Hills K."/>
            <person name="Hinton J."/>
            <person name="Jenkinson A."/>
            <person name="Jones D."/>
            <person name="Menzies A."/>
            <person name="Mironenko T."/>
            <person name="Perry J."/>
            <person name="Raine K."/>
            <person name="Richardson D."/>
            <person name="Shepherd R."/>
            <person name="Small A."/>
            <person name="Tofts C."/>
            <person name="Varian J."/>
            <person name="Webb T."/>
            <person name="West S."/>
            <person name="Widaa S."/>
            <person name="Yates A."/>
            <person name="Cahill D.P."/>
            <person name="Louis D.N."/>
            <person name="Goldstraw P."/>
            <person name="Nicholson A.G."/>
            <person name="Brasseur F."/>
            <person name="Looijenga L."/>
            <person name="Weber B.L."/>
            <person name="Chiew Y.-E."/>
            <person name="DeFazio A."/>
            <person name="Greaves M.F."/>
            <person name="Green A.R."/>
            <person name="Campbell P."/>
            <person name="Birney E."/>
            <person name="Easton D.F."/>
            <person name="Chenevix-Trench G."/>
            <person name="Tan M.-H."/>
            <person name="Khoo S.K."/>
            <person name="Teh B.T."/>
            <person name="Yuen S.T."/>
            <person name="Leung S.Y."/>
            <person name="Wooster R."/>
            <person name="Futreal P.A."/>
            <person name="Stratton M.R."/>
        </authorList>
    </citation>
    <scope>VARIANTS [LARGE SCALE ANALYSIS] ASN-240; VAL-306; LEU-330 AND ASN-354</scope>
</reference>
<proteinExistence type="evidence at protein level"/>
<name>KPCT_HUMAN</name>
<sequence length="706" mass="81865">MSPFLRIGLSNFDCGSCQSCQGEAVNPYCAVLVKEYVESENGQMYIQKKPTMYPPWDSTFDAHINKGRVMQIIVKGKNVDLISETTVELYSLAERCRKNNGKTEIWLELKPQGRMLMNARYFLEMSDTKDMNEFETEGFFALHQRRGAIKQAKVHHVKCHEFTATFFPQPTFCSVCHEFVWGLNKQGYQCRQCNAAIHKKCIDKVIAKCTGSAINSRETMFHKERFKIDMPHRFKVYNYKSPTFCEHCGTLLWGLARQGLKCDACGMNVHHRCQTKVANLCGINQKLMAEALAMIESTQQARCLRDTEQIFREGPVEIGLPCSIKNEARPPCLPTPGKREPQGISWESPLDEVDKMCHLPEPELNKERPSLQIKLKIEDFILHKMLGKGSFGKVFLAEFKKTNQFFAIKALKKDVVLMDDDVECTMVEKRVLSLAWEHPFLTHMFCTFQTKENLFFVMEYLNGGDLMYHIQSCHKFDLSRATFYAAEIILGLQFLHSKGIVYRDLKLDNILLDKDGHIKIADFGMCKENMLGDAKTNTFCGTPDYIAPEILLGQKYNHSVDWWSFGVLLYEMLIGQSPFHGQDEEELFHSIRMDNPFYPRWLEKEAKDLLVKLFVREPEKRLGVRGDIRQHPLFREINWEELERKEIDPPFRPKVKSPFDCSNFDKEFLNEKPRLSFADRALINSMDQNMFRNFSFMNPGMERLIS</sequence>
<dbReference type="EC" id="2.7.11.13" evidence="20 21 22"/>
<dbReference type="EMBL" id="L01087">
    <property type="protein sequence ID" value="AAA75571.1"/>
    <property type="molecule type" value="mRNA"/>
</dbReference>
<dbReference type="EMBL" id="L07032">
    <property type="protein sequence ID" value="AAA60101.1"/>
    <property type="molecule type" value="mRNA"/>
</dbReference>
<dbReference type="EMBL" id="AY702977">
    <property type="protein sequence ID" value="AAU29340.1"/>
    <property type="molecule type" value="mRNA"/>
</dbReference>
<dbReference type="EMBL" id="AK293935">
    <property type="protein sequence ID" value="BAG57313.1"/>
    <property type="molecule type" value="mRNA"/>
</dbReference>
<dbReference type="EMBL" id="AL158043">
    <property type="status" value="NOT_ANNOTATED_CDS"/>
    <property type="molecule type" value="Genomic_DNA"/>
</dbReference>
<dbReference type="EMBL" id="AL137145">
    <property type="status" value="NOT_ANNOTATED_CDS"/>
    <property type="molecule type" value="Genomic_DNA"/>
</dbReference>
<dbReference type="EMBL" id="BC101465">
    <property type="protein sequence ID" value="AAI01466.1"/>
    <property type="molecule type" value="mRNA"/>
</dbReference>
<dbReference type="EMBL" id="BC113359">
    <property type="protein sequence ID" value="AAI13360.1"/>
    <property type="molecule type" value="mRNA"/>
</dbReference>
<dbReference type="CCDS" id="CCDS55701.1">
    <molecule id="Q04759-2"/>
</dbReference>
<dbReference type="CCDS" id="CCDS60482.1">
    <molecule id="Q04759-3"/>
</dbReference>
<dbReference type="CCDS" id="CCDS7079.1">
    <molecule id="Q04759-1"/>
</dbReference>
<dbReference type="PIR" id="A45416">
    <property type="entry name" value="A45416"/>
</dbReference>
<dbReference type="RefSeq" id="NP_001229342.1">
    <molecule id="Q04759-2"/>
    <property type="nucleotide sequence ID" value="NM_001242413.2"/>
</dbReference>
<dbReference type="RefSeq" id="NP_001269573.1">
    <property type="nucleotide sequence ID" value="NM_001282644.1"/>
</dbReference>
<dbReference type="RefSeq" id="NP_001269574.1">
    <molecule id="Q04759-3"/>
    <property type="nucleotide sequence ID" value="NM_001282645.1"/>
</dbReference>
<dbReference type="RefSeq" id="NP_001310194.1">
    <molecule id="Q04759-1"/>
    <property type="nucleotide sequence ID" value="NM_001323265.1"/>
</dbReference>
<dbReference type="RefSeq" id="NP_001310195.1">
    <molecule id="Q04759-3"/>
    <property type="nucleotide sequence ID" value="NM_001323266.2"/>
</dbReference>
<dbReference type="RefSeq" id="NP_006248.1">
    <molecule id="Q04759-1"/>
    <property type="nucleotide sequence ID" value="NM_006257.5"/>
</dbReference>
<dbReference type="RefSeq" id="XP_006717528.1">
    <property type="nucleotide sequence ID" value="XM_006717465.3"/>
</dbReference>
<dbReference type="RefSeq" id="XP_016871899.1">
    <property type="nucleotide sequence ID" value="XM_017016410.1"/>
</dbReference>
<dbReference type="RefSeq" id="XP_016871900.1">
    <property type="nucleotide sequence ID" value="XM_017016411.1"/>
</dbReference>
<dbReference type="PDB" id="1XJD">
    <property type="method" value="X-ray"/>
    <property type="resolution" value="2.00 A"/>
    <property type="chains" value="A=362-706"/>
</dbReference>
<dbReference type="PDB" id="2ENJ">
    <property type="method" value="NMR"/>
    <property type="chains" value="A=1-125"/>
</dbReference>
<dbReference type="PDB" id="2ENN">
    <property type="method" value="NMR"/>
    <property type="chains" value="A=144-213"/>
</dbReference>
<dbReference type="PDB" id="2ENZ">
    <property type="method" value="NMR"/>
    <property type="chains" value="A=227-284"/>
</dbReference>
<dbReference type="PDB" id="2JED">
    <property type="method" value="X-ray"/>
    <property type="resolution" value="2.32 A"/>
    <property type="chains" value="A/B=361-706"/>
</dbReference>
<dbReference type="PDB" id="4Q9Z">
    <property type="method" value="X-ray"/>
    <property type="resolution" value="2.60 A"/>
    <property type="chains" value="A/B=374-706"/>
</dbReference>
<dbReference type="PDB" id="4RA5">
    <property type="method" value="X-ray"/>
    <property type="resolution" value="2.61 A"/>
    <property type="chains" value="A/B=374-706"/>
</dbReference>
<dbReference type="PDB" id="5F9E">
    <property type="method" value="X-ray"/>
    <property type="resolution" value="2.00 A"/>
    <property type="chains" value="A/B=361-706"/>
</dbReference>
<dbReference type="PDBsum" id="1XJD"/>
<dbReference type="PDBsum" id="2ENJ"/>
<dbReference type="PDBsum" id="2ENN"/>
<dbReference type="PDBsum" id="2ENZ"/>
<dbReference type="PDBsum" id="2JED"/>
<dbReference type="PDBsum" id="4Q9Z"/>
<dbReference type="PDBsum" id="4RA5"/>
<dbReference type="PDBsum" id="5F9E"/>
<dbReference type="SMR" id="Q04759"/>
<dbReference type="BioGRID" id="111574">
    <property type="interactions" value="60"/>
</dbReference>
<dbReference type="CORUM" id="Q04759"/>
<dbReference type="FunCoup" id="Q04759">
    <property type="interactions" value="797"/>
</dbReference>
<dbReference type="IntAct" id="Q04759">
    <property type="interactions" value="27"/>
</dbReference>
<dbReference type="MINT" id="Q04759"/>
<dbReference type="STRING" id="9606.ENSP00000263125"/>
<dbReference type="BindingDB" id="Q04759"/>
<dbReference type="ChEMBL" id="CHEMBL3920"/>
<dbReference type="DrugBank" id="DB09096">
    <property type="generic name" value="Benzoyl peroxide"/>
</dbReference>
<dbReference type="DrugBank" id="DB04209">
    <property type="generic name" value="Dequalinium"/>
</dbReference>
<dbReference type="DrugBank" id="DB04522">
    <property type="generic name" value="Dexfosfoserine"/>
</dbReference>
<dbReference type="DrugBank" id="DB12010">
    <property type="generic name" value="Fostamatinib"/>
</dbReference>
<dbReference type="DrugBank" id="DB02482">
    <property type="generic name" value="Phosphonothreonine"/>
</dbReference>
<dbReference type="DrugBank" id="DB12369">
    <property type="generic name" value="Sotrastaurin"/>
</dbReference>
<dbReference type="DrugBank" id="DB02010">
    <property type="generic name" value="Staurosporine"/>
</dbReference>
<dbReference type="DrugBank" id="DB00675">
    <property type="generic name" value="Tamoxifen"/>
</dbReference>
<dbReference type="DrugCentral" id="Q04759"/>
<dbReference type="GuidetoPHARMACOLOGY" id="1488"/>
<dbReference type="CarbonylDB" id="Q04759"/>
<dbReference type="GlyGen" id="Q04759">
    <property type="glycosylation" value="3 sites, 1 O-linked glycan (2 sites)"/>
</dbReference>
<dbReference type="iPTMnet" id="Q04759"/>
<dbReference type="PhosphoSitePlus" id="Q04759"/>
<dbReference type="BioMuta" id="PRKCQ"/>
<dbReference type="DMDM" id="20141582"/>
<dbReference type="CPTAC" id="CPTAC-2825"/>
<dbReference type="CPTAC" id="non-CPTAC-2890"/>
<dbReference type="jPOST" id="Q04759"/>
<dbReference type="MassIVE" id="Q04759"/>
<dbReference type="PaxDb" id="9606-ENSP00000263125"/>
<dbReference type="PeptideAtlas" id="Q04759"/>
<dbReference type="ProteomicsDB" id="4008"/>
<dbReference type="ProteomicsDB" id="58279">
    <molecule id="Q04759-1"/>
</dbReference>
<dbReference type="ProteomicsDB" id="58280">
    <molecule id="Q04759-2"/>
</dbReference>
<dbReference type="Pumba" id="Q04759"/>
<dbReference type="Antibodypedia" id="10940">
    <property type="antibodies" value="856 antibodies from 41 providers"/>
</dbReference>
<dbReference type="DNASU" id="5588"/>
<dbReference type="Ensembl" id="ENST00000263125.10">
    <molecule id="Q04759-1"/>
    <property type="protein sequence ID" value="ENSP00000263125.5"/>
    <property type="gene ID" value="ENSG00000065675.16"/>
</dbReference>
<dbReference type="Ensembl" id="ENST00000397176.6">
    <molecule id="Q04759-2"/>
    <property type="protein sequence ID" value="ENSP00000380361.2"/>
    <property type="gene ID" value="ENSG00000065675.16"/>
</dbReference>
<dbReference type="Ensembl" id="ENST00000539722.5">
    <molecule id="Q04759-3"/>
    <property type="protein sequence ID" value="ENSP00000441752.1"/>
    <property type="gene ID" value="ENSG00000065675.16"/>
</dbReference>
<dbReference type="GeneID" id="5588"/>
<dbReference type="KEGG" id="hsa:5588"/>
<dbReference type="MANE-Select" id="ENST00000263125.10">
    <property type="protein sequence ID" value="ENSP00000263125.5"/>
    <property type="RefSeq nucleotide sequence ID" value="NM_006257.5"/>
    <property type="RefSeq protein sequence ID" value="NP_006248.1"/>
</dbReference>
<dbReference type="UCSC" id="uc001ijj.3">
    <molecule id="Q04759-1"/>
    <property type="organism name" value="human"/>
</dbReference>
<dbReference type="AGR" id="HGNC:9410"/>
<dbReference type="CTD" id="5588"/>
<dbReference type="DisGeNET" id="5588"/>
<dbReference type="GeneCards" id="PRKCQ"/>
<dbReference type="HGNC" id="HGNC:9410">
    <property type="gene designation" value="PRKCQ"/>
</dbReference>
<dbReference type="HPA" id="ENSG00000065675">
    <property type="expression patterns" value="Group enriched (lymphoid tissue, skeletal muscle, tongue)"/>
</dbReference>
<dbReference type="MalaCards" id="PRKCQ"/>
<dbReference type="MIM" id="600448">
    <property type="type" value="gene"/>
</dbReference>
<dbReference type="neXtProt" id="NX_Q04759"/>
<dbReference type="OpenTargets" id="ENSG00000065675"/>
<dbReference type="PharmGKB" id="PA33773"/>
<dbReference type="VEuPathDB" id="HostDB:ENSG00000065675"/>
<dbReference type="eggNOG" id="KOG0694">
    <property type="taxonomic scope" value="Eukaryota"/>
</dbReference>
<dbReference type="GeneTree" id="ENSGT00940000157638"/>
<dbReference type="HOGENOM" id="CLU_000288_54_4_1"/>
<dbReference type="InParanoid" id="Q04759"/>
<dbReference type="OMA" id="EIWIELK"/>
<dbReference type="OrthoDB" id="63267at2759"/>
<dbReference type="PAN-GO" id="Q04759">
    <property type="GO annotations" value="3 GO annotations based on evolutionary models"/>
</dbReference>
<dbReference type="PhylomeDB" id="Q04759"/>
<dbReference type="TreeFam" id="TF102004"/>
<dbReference type="BRENDA" id="2.7.11.13">
    <property type="organism ID" value="2681"/>
</dbReference>
<dbReference type="PathwayCommons" id="Q04759"/>
<dbReference type="Reactome" id="R-HSA-111465">
    <property type="pathway name" value="Apoptotic cleavage of cellular proteins"/>
</dbReference>
<dbReference type="Reactome" id="R-HSA-114508">
    <property type="pathway name" value="Effects of PIP2 hydrolysis"/>
</dbReference>
<dbReference type="Reactome" id="R-HSA-202424">
    <property type="pathway name" value="Downstream TCR signaling"/>
</dbReference>
<dbReference type="Reactome" id="R-HSA-2514859">
    <property type="pathway name" value="Inactivation, recovery and regulation of the phototransduction cascade"/>
</dbReference>
<dbReference type="Reactome" id="R-HSA-2871837">
    <property type="pathway name" value="FCERI mediated NF-kB activation"/>
</dbReference>
<dbReference type="Reactome" id="R-HSA-373752">
    <property type="pathway name" value="Netrin-1 signaling"/>
</dbReference>
<dbReference type="Reactome" id="R-HSA-418597">
    <property type="pathway name" value="G alpha (z) signalling events"/>
</dbReference>
<dbReference type="Reactome" id="R-HSA-8936459">
    <property type="pathway name" value="RUNX1 regulates genes involved in megakaryocyte differentiation and platelet function"/>
</dbReference>
<dbReference type="Reactome" id="R-HSA-9648002">
    <property type="pathway name" value="RAS processing"/>
</dbReference>
<dbReference type="SABIO-RK" id="Q04759"/>
<dbReference type="SignaLink" id="Q04759"/>
<dbReference type="SIGNOR" id="Q04759"/>
<dbReference type="BioGRID-ORCS" id="5588">
    <property type="hits" value="12 hits in 1187 CRISPR screens"/>
</dbReference>
<dbReference type="CD-CODE" id="8C2F96ED">
    <property type="entry name" value="Centrosome"/>
</dbReference>
<dbReference type="ChiTaRS" id="PRKCQ">
    <property type="organism name" value="human"/>
</dbReference>
<dbReference type="EvolutionaryTrace" id="Q04759"/>
<dbReference type="GeneWiki" id="PRKCQ"/>
<dbReference type="GenomeRNAi" id="5588"/>
<dbReference type="Pharos" id="Q04759">
    <property type="development level" value="Tchem"/>
</dbReference>
<dbReference type="PRO" id="PR:Q04759"/>
<dbReference type="Proteomes" id="UP000005640">
    <property type="component" value="Chromosome 10"/>
</dbReference>
<dbReference type="RNAct" id="Q04759">
    <property type="molecule type" value="protein"/>
</dbReference>
<dbReference type="Bgee" id="ENSG00000065675">
    <property type="expression patterns" value="Expressed in triceps brachii and 170 other cell types or tissues"/>
</dbReference>
<dbReference type="ExpressionAtlas" id="Q04759">
    <property type="expression patterns" value="baseline and differential"/>
</dbReference>
<dbReference type="GO" id="GO:0016235">
    <property type="term" value="C:aggresome"/>
    <property type="evidence" value="ECO:0000314"/>
    <property type="project" value="HPA"/>
</dbReference>
<dbReference type="GO" id="GO:0034451">
    <property type="term" value="C:centriolar satellite"/>
    <property type="evidence" value="ECO:0000314"/>
    <property type="project" value="HPA"/>
</dbReference>
<dbReference type="GO" id="GO:0005829">
    <property type="term" value="C:cytosol"/>
    <property type="evidence" value="ECO:0000304"/>
    <property type="project" value="Reactome"/>
</dbReference>
<dbReference type="GO" id="GO:0001772">
    <property type="term" value="C:immunological synapse"/>
    <property type="evidence" value="ECO:0007669"/>
    <property type="project" value="Ensembl"/>
</dbReference>
<dbReference type="GO" id="GO:0005886">
    <property type="term" value="C:plasma membrane"/>
    <property type="evidence" value="ECO:0000304"/>
    <property type="project" value="Reactome"/>
</dbReference>
<dbReference type="GO" id="GO:0005524">
    <property type="term" value="F:ATP binding"/>
    <property type="evidence" value="ECO:0007669"/>
    <property type="project" value="UniProtKB-KW"/>
</dbReference>
<dbReference type="GO" id="GO:0004697">
    <property type="term" value="F:diacylglycerol-dependent serine/threonine kinase activity"/>
    <property type="evidence" value="ECO:0000269"/>
    <property type="project" value="Reactome"/>
</dbReference>
<dbReference type="GO" id="GO:0004672">
    <property type="term" value="F:protein kinase activity"/>
    <property type="evidence" value="ECO:0000314"/>
    <property type="project" value="UniProtKB"/>
</dbReference>
<dbReference type="GO" id="GO:0106310">
    <property type="term" value="F:protein serine kinase activity"/>
    <property type="evidence" value="ECO:0007669"/>
    <property type="project" value="RHEA"/>
</dbReference>
<dbReference type="GO" id="GO:0004674">
    <property type="term" value="F:protein serine/threonine kinase activity"/>
    <property type="evidence" value="ECO:0000318"/>
    <property type="project" value="GO_Central"/>
</dbReference>
<dbReference type="GO" id="GO:0008270">
    <property type="term" value="F:zinc ion binding"/>
    <property type="evidence" value="ECO:0007669"/>
    <property type="project" value="UniProtKB-KW"/>
</dbReference>
<dbReference type="GO" id="GO:0007411">
    <property type="term" value="P:axon guidance"/>
    <property type="evidence" value="ECO:0000304"/>
    <property type="project" value="Reactome"/>
</dbReference>
<dbReference type="GO" id="GO:0035739">
    <property type="term" value="P:CD4-positive, alpha-beta T cell proliferation"/>
    <property type="evidence" value="ECO:0007669"/>
    <property type="project" value="Ensembl"/>
</dbReference>
<dbReference type="GO" id="GO:0060326">
    <property type="term" value="P:cell chemotaxis"/>
    <property type="evidence" value="ECO:0000315"/>
    <property type="project" value="UniProtKB"/>
</dbReference>
<dbReference type="GO" id="GO:0038095">
    <property type="term" value="P:Fc-epsilon receptor signaling pathway"/>
    <property type="evidence" value="ECO:0000304"/>
    <property type="project" value="Reactome"/>
</dbReference>
<dbReference type="GO" id="GO:0006954">
    <property type="term" value="P:inflammatory response"/>
    <property type="evidence" value="ECO:0007669"/>
    <property type="project" value="UniProtKB-KW"/>
</dbReference>
<dbReference type="GO" id="GO:0035556">
    <property type="term" value="P:intracellular signal transduction"/>
    <property type="evidence" value="ECO:0000318"/>
    <property type="project" value="GO_Central"/>
</dbReference>
<dbReference type="GO" id="GO:0006509">
    <property type="term" value="P:membrane protein ectodomain proteolysis"/>
    <property type="evidence" value="ECO:0000250"/>
    <property type="project" value="BHF-UCL"/>
</dbReference>
<dbReference type="GO" id="GO:0046627">
    <property type="term" value="P:negative regulation of insulin receptor signaling pathway"/>
    <property type="evidence" value="ECO:0000315"/>
    <property type="project" value="UniProtKB"/>
</dbReference>
<dbReference type="GO" id="GO:0070233">
    <property type="term" value="P:negative regulation of T cell apoptotic process"/>
    <property type="evidence" value="ECO:0000315"/>
    <property type="project" value="UniProtKB"/>
</dbReference>
<dbReference type="GO" id="GO:2000563">
    <property type="term" value="P:positive regulation of CD4-positive, alpha-beta T cell proliferation"/>
    <property type="evidence" value="ECO:0007669"/>
    <property type="project" value="Ensembl"/>
</dbReference>
<dbReference type="GO" id="GO:0032740">
    <property type="term" value="P:positive regulation of interleukin-17 production"/>
    <property type="evidence" value="ECO:0000250"/>
    <property type="project" value="UniProtKB"/>
</dbReference>
<dbReference type="GO" id="GO:0032743">
    <property type="term" value="P:positive regulation of interleukin-2 production"/>
    <property type="evidence" value="ECO:0007669"/>
    <property type="project" value="Ensembl"/>
</dbReference>
<dbReference type="GO" id="GO:0032753">
    <property type="term" value="P:positive regulation of interleukin-4 production"/>
    <property type="evidence" value="ECO:0000250"/>
    <property type="project" value="UniProtKB"/>
</dbReference>
<dbReference type="GO" id="GO:0051092">
    <property type="term" value="P:positive regulation of NF-kappaB transcription factor activity"/>
    <property type="evidence" value="ECO:0000314"/>
    <property type="project" value="UniProtKB"/>
</dbReference>
<dbReference type="GO" id="GO:0050870">
    <property type="term" value="P:positive regulation of T cell activation"/>
    <property type="evidence" value="ECO:0000250"/>
    <property type="project" value="UniProtKB"/>
</dbReference>
<dbReference type="GO" id="GO:2000318">
    <property type="term" value="P:positive regulation of T-helper 17 type immune response"/>
    <property type="evidence" value="ECO:0000250"/>
    <property type="project" value="UniProtKB"/>
</dbReference>
<dbReference type="GO" id="GO:2000570">
    <property type="term" value="P:positive regulation of T-helper 2 cell activation"/>
    <property type="evidence" value="ECO:0000250"/>
    <property type="project" value="UniProtKB"/>
</dbReference>
<dbReference type="GO" id="GO:0032206">
    <property type="term" value="P:positive regulation of telomere maintenance"/>
    <property type="evidence" value="ECO:0000315"/>
    <property type="project" value="BHF-UCL"/>
</dbReference>
<dbReference type="GO" id="GO:0006468">
    <property type="term" value="P:protein phosphorylation"/>
    <property type="evidence" value="ECO:0000314"/>
    <property type="project" value="UniProtKB"/>
</dbReference>
<dbReference type="GO" id="GO:0001558">
    <property type="term" value="P:regulation of cell growth"/>
    <property type="evidence" value="ECO:0000303"/>
    <property type="project" value="UniProtKB"/>
</dbReference>
<dbReference type="GO" id="GO:0006355">
    <property type="term" value="P:regulation of DNA-templated transcription"/>
    <property type="evidence" value="ECO:0000250"/>
    <property type="project" value="UniProtKB"/>
</dbReference>
<dbReference type="GO" id="GO:0090330">
    <property type="term" value="P:regulation of platelet aggregation"/>
    <property type="evidence" value="ECO:0000250"/>
    <property type="project" value="UniProtKB"/>
</dbReference>
<dbReference type="CDD" id="cd20834">
    <property type="entry name" value="C1_nPKC_theta-like_rpt1"/>
    <property type="match status" value="1"/>
</dbReference>
<dbReference type="CDD" id="cd20837">
    <property type="entry name" value="C1_nPKC_theta-like_rpt2"/>
    <property type="match status" value="1"/>
</dbReference>
<dbReference type="CDD" id="cd05619">
    <property type="entry name" value="STKc_nPKC_theta"/>
    <property type="match status" value="1"/>
</dbReference>
<dbReference type="FunFam" id="3.30.200.20:FF:000360">
    <property type="entry name" value="Protein kinase C"/>
    <property type="match status" value="1"/>
</dbReference>
<dbReference type="FunFam" id="3.30.60.20:FF:000003">
    <property type="entry name" value="Protein kinase C delta"/>
    <property type="match status" value="1"/>
</dbReference>
<dbReference type="FunFam" id="2.60.40.150:FF:000049">
    <property type="entry name" value="Protein kinase C delta type"/>
    <property type="match status" value="1"/>
</dbReference>
<dbReference type="FunFam" id="3.30.60.20:FF:000008">
    <property type="entry name" value="Protein kinase C theta"/>
    <property type="match status" value="1"/>
</dbReference>
<dbReference type="FunFam" id="1.10.510.10:FF:000150">
    <property type="entry name" value="Protein kinase C, theta"/>
    <property type="match status" value="1"/>
</dbReference>
<dbReference type="Gene3D" id="3.30.60.20">
    <property type="match status" value="2"/>
</dbReference>
<dbReference type="Gene3D" id="2.60.40.150">
    <property type="entry name" value="C2 domain"/>
    <property type="match status" value="1"/>
</dbReference>
<dbReference type="Gene3D" id="3.30.200.20">
    <property type="entry name" value="Phosphorylase Kinase, domain 1"/>
    <property type="match status" value="1"/>
</dbReference>
<dbReference type="Gene3D" id="1.10.510.10">
    <property type="entry name" value="Transferase(Phosphotransferase) domain 1"/>
    <property type="match status" value="1"/>
</dbReference>
<dbReference type="InterPro" id="IPR000961">
    <property type="entry name" value="AGC-kinase_C"/>
</dbReference>
<dbReference type="InterPro" id="IPR046349">
    <property type="entry name" value="C1-like_sf"/>
</dbReference>
<dbReference type="InterPro" id="IPR000008">
    <property type="entry name" value="C2_dom"/>
</dbReference>
<dbReference type="InterPro" id="IPR035892">
    <property type="entry name" value="C2_domain_sf"/>
</dbReference>
<dbReference type="InterPro" id="IPR020454">
    <property type="entry name" value="DAG/PE-bd"/>
</dbReference>
<dbReference type="InterPro" id="IPR011009">
    <property type="entry name" value="Kinase-like_dom_sf"/>
</dbReference>
<dbReference type="InterPro" id="IPR034668">
    <property type="entry name" value="nPKC_theta"/>
</dbReference>
<dbReference type="InterPro" id="IPR002219">
    <property type="entry name" value="PE/DAG-bd"/>
</dbReference>
<dbReference type="InterPro" id="IPR027264">
    <property type="entry name" value="PKC_theta"/>
</dbReference>
<dbReference type="InterPro" id="IPR017892">
    <property type="entry name" value="Pkinase_C"/>
</dbReference>
<dbReference type="InterPro" id="IPR014376">
    <property type="entry name" value="Prot_kin_PKC_delta"/>
</dbReference>
<dbReference type="InterPro" id="IPR000719">
    <property type="entry name" value="Prot_kinase_dom"/>
</dbReference>
<dbReference type="InterPro" id="IPR017441">
    <property type="entry name" value="Protein_kinase_ATP_BS"/>
</dbReference>
<dbReference type="InterPro" id="IPR008271">
    <property type="entry name" value="Ser/Thr_kinase_AS"/>
</dbReference>
<dbReference type="PANTHER" id="PTHR24351">
    <property type="entry name" value="RIBOSOMAL PROTEIN S6 KINASE"/>
    <property type="match status" value="1"/>
</dbReference>
<dbReference type="Pfam" id="PF00130">
    <property type="entry name" value="C1_1"/>
    <property type="match status" value="2"/>
</dbReference>
<dbReference type="Pfam" id="PF21494">
    <property type="entry name" value="PKC_C2"/>
    <property type="match status" value="1"/>
</dbReference>
<dbReference type="Pfam" id="PF00069">
    <property type="entry name" value="Pkinase"/>
    <property type="match status" value="1"/>
</dbReference>
<dbReference type="Pfam" id="PF00433">
    <property type="entry name" value="Pkinase_C"/>
    <property type="match status" value="1"/>
</dbReference>
<dbReference type="PIRSF" id="PIRSF000551">
    <property type="entry name" value="PKC_delta"/>
    <property type="match status" value="1"/>
</dbReference>
<dbReference type="PIRSF" id="PIRSF501105">
    <property type="entry name" value="Protein_kin_C_theta"/>
    <property type="match status" value="1"/>
</dbReference>
<dbReference type="PRINTS" id="PR00008">
    <property type="entry name" value="DAGPEDOMAIN"/>
</dbReference>
<dbReference type="SMART" id="SM00109">
    <property type="entry name" value="C1"/>
    <property type="match status" value="2"/>
</dbReference>
<dbReference type="SMART" id="SM00133">
    <property type="entry name" value="S_TK_X"/>
    <property type="match status" value="1"/>
</dbReference>
<dbReference type="SMART" id="SM00220">
    <property type="entry name" value="S_TKc"/>
    <property type="match status" value="1"/>
</dbReference>
<dbReference type="SUPFAM" id="SSF49562">
    <property type="entry name" value="C2 domain (Calcium/lipid-binding domain, CaLB)"/>
    <property type="match status" value="1"/>
</dbReference>
<dbReference type="SUPFAM" id="SSF57889">
    <property type="entry name" value="Cysteine-rich domain"/>
    <property type="match status" value="2"/>
</dbReference>
<dbReference type="SUPFAM" id="SSF56112">
    <property type="entry name" value="Protein kinase-like (PK-like)"/>
    <property type="match status" value="1"/>
</dbReference>
<dbReference type="PROSITE" id="PS51285">
    <property type="entry name" value="AGC_KINASE_CTER"/>
    <property type="match status" value="1"/>
</dbReference>
<dbReference type="PROSITE" id="PS50004">
    <property type="entry name" value="C2"/>
    <property type="match status" value="1"/>
</dbReference>
<dbReference type="PROSITE" id="PS00107">
    <property type="entry name" value="PROTEIN_KINASE_ATP"/>
    <property type="match status" value="1"/>
</dbReference>
<dbReference type="PROSITE" id="PS50011">
    <property type="entry name" value="PROTEIN_KINASE_DOM"/>
    <property type="match status" value="1"/>
</dbReference>
<dbReference type="PROSITE" id="PS00108">
    <property type="entry name" value="PROTEIN_KINASE_ST"/>
    <property type="match status" value="1"/>
</dbReference>
<dbReference type="PROSITE" id="PS00479">
    <property type="entry name" value="ZF_DAG_PE_1"/>
    <property type="match status" value="2"/>
</dbReference>
<dbReference type="PROSITE" id="PS50081">
    <property type="entry name" value="ZF_DAG_PE_2"/>
    <property type="match status" value="2"/>
</dbReference>
<keyword id="KW-0002">3D-structure</keyword>
<keyword id="KW-0025">Alternative splicing</keyword>
<keyword id="KW-0067">ATP-binding</keyword>
<keyword id="KW-1003">Cell membrane</keyword>
<keyword id="KW-0963">Cytoplasm</keyword>
<keyword id="KW-0391">Immunity</keyword>
<keyword id="KW-0395">Inflammatory response</keyword>
<keyword id="KW-0418">Kinase</keyword>
<keyword id="KW-0460">Magnesium</keyword>
<keyword id="KW-0472">Membrane</keyword>
<keyword id="KW-0479">Metal-binding</keyword>
<keyword id="KW-0547">Nucleotide-binding</keyword>
<keyword id="KW-0597">Phosphoprotein</keyword>
<keyword id="KW-1267">Proteomics identification</keyword>
<keyword id="KW-1185">Reference proteome</keyword>
<keyword id="KW-0677">Repeat</keyword>
<keyword id="KW-0723">Serine/threonine-protein kinase</keyword>
<keyword id="KW-0808">Transferase</keyword>
<keyword id="KW-0862">Zinc</keyword>
<keyword id="KW-0863">Zinc-finger</keyword>
<organism>
    <name type="scientific">Homo sapiens</name>
    <name type="common">Human</name>
    <dbReference type="NCBI Taxonomy" id="9606"/>
    <lineage>
        <taxon>Eukaryota</taxon>
        <taxon>Metazoa</taxon>
        <taxon>Chordata</taxon>
        <taxon>Craniata</taxon>
        <taxon>Vertebrata</taxon>
        <taxon>Euteleostomi</taxon>
        <taxon>Mammalia</taxon>
        <taxon>Eutheria</taxon>
        <taxon>Euarchontoglires</taxon>
        <taxon>Primates</taxon>
        <taxon>Haplorrhini</taxon>
        <taxon>Catarrhini</taxon>
        <taxon>Hominidae</taxon>
        <taxon>Homo</taxon>
    </lineage>
</organism>
<protein>
    <recommendedName>
        <fullName>Protein kinase C theta type</fullName>
        <ecNumber evidence="20 21 22">2.7.11.13</ecNumber>
    </recommendedName>
    <alternativeName>
        <fullName>nPKC-theta</fullName>
    </alternativeName>
</protein>
<accession>Q04759</accession>
<accession>B4DF52</accession>
<accession>Q14DH6</accession>
<accession>Q3MJF1</accession>
<accession>Q64FY5</accession>
<accession>Q9H508</accession>
<accession>Q9H549</accession>